<dbReference type="EC" id="6.1.1.16" evidence="1"/>
<dbReference type="EMBL" id="CP001407">
    <property type="protein sequence ID" value="ACO28274.1"/>
    <property type="molecule type" value="Genomic_DNA"/>
</dbReference>
<dbReference type="RefSeq" id="WP_000152255.1">
    <property type="nucleotide sequence ID" value="NZ_CP009318.1"/>
</dbReference>
<dbReference type="SMR" id="C1ET19"/>
<dbReference type="KEGG" id="bcx:BCA_0118"/>
<dbReference type="PATRIC" id="fig|572264.18.peg.154"/>
<dbReference type="Proteomes" id="UP000002210">
    <property type="component" value="Chromosome"/>
</dbReference>
<dbReference type="GO" id="GO:0005829">
    <property type="term" value="C:cytosol"/>
    <property type="evidence" value="ECO:0007669"/>
    <property type="project" value="TreeGrafter"/>
</dbReference>
<dbReference type="GO" id="GO:0005524">
    <property type="term" value="F:ATP binding"/>
    <property type="evidence" value="ECO:0007669"/>
    <property type="project" value="UniProtKB-UniRule"/>
</dbReference>
<dbReference type="GO" id="GO:0004817">
    <property type="term" value="F:cysteine-tRNA ligase activity"/>
    <property type="evidence" value="ECO:0007669"/>
    <property type="project" value="UniProtKB-UniRule"/>
</dbReference>
<dbReference type="GO" id="GO:0008270">
    <property type="term" value="F:zinc ion binding"/>
    <property type="evidence" value="ECO:0007669"/>
    <property type="project" value="UniProtKB-UniRule"/>
</dbReference>
<dbReference type="GO" id="GO:0006423">
    <property type="term" value="P:cysteinyl-tRNA aminoacylation"/>
    <property type="evidence" value="ECO:0007669"/>
    <property type="project" value="UniProtKB-UniRule"/>
</dbReference>
<dbReference type="CDD" id="cd00672">
    <property type="entry name" value="CysRS_core"/>
    <property type="match status" value="1"/>
</dbReference>
<dbReference type="FunFam" id="1.20.120.1910:FF:000002">
    <property type="entry name" value="Cysteine--tRNA ligase"/>
    <property type="match status" value="1"/>
</dbReference>
<dbReference type="FunFam" id="3.40.50.620:FF:000009">
    <property type="entry name" value="Cysteine--tRNA ligase"/>
    <property type="match status" value="1"/>
</dbReference>
<dbReference type="Gene3D" id="1.20.120.1910">
    <property type="entry name" value="Cysteine-tRNA ligase, C-terminal anti-codon recognition domain"/>
    <property type="match status" value="1"/>
</dbReference>
<dbReference type="Gene3D" id="3.40.50.620">
    <property type="entry name" value="HUPs"/>
    <property type="match status" value="1"/>
</dbReference>
<dbReference type="HAMAP" id="MF_00041">
    <property type="entry name" value="Cys_tRNA_synth"/>
    <property type="match status" value="1"/>
</dbReference>
<dbReference type="InterPro" id="IPR015803">
    <property type="entry name" value="Cys-tRNA-ligase"/>
</dbReference>
<dbReference type="InterPro" id="IPR015273">
    <property type="entry name" value="Cys-tRNA-synt_Ia_DALR"/>
</dbReference>
<dbReference type="InterPro" id="IPR024909">
    <property type="entry name" value="Cys-tRNA/MSH_ligase"/>
</dbReference>
<dbReference type="InterPro" id="IPR014729">
    <property type="entry name" value="Rossmann-like_a/b/a_fold"/>
</dbReference>
<dbReference type="InterPro" id="IPR032678">
    <property type="entry name" value="tRNA-synt_1_cat_dom"/>
</dbReference>
<dbReference type="InterPro" id="IPR009080">
    <property type="entry name" value="tRNAsynth_Ia_anticodon-bd"/>
</dbReference>
<dbReference type="NCBIfam" id="TIGR00435">
    <property type="entry name" value="cysS"/>
    <property type="match status" value="1"/>
</dbReference>
<dbReference type="PANTHER" id="PTHR10890:SF3">
    <property type="entry name" value="CYSTEINE--TRNA LIGASE, CYTOPLASMIC"/>
    <property type="match status" value="1"/>
</dbReference>
<dbReference type="PANTHER" id="PTHR10890">
    <property type="entry name" value="CYSTEINYL-TRNA SYNTHETASE"/>
    <property type="match status" value="1"/>
</dbReference>
<dbReference type="Pfam" id="PF09190">
    <property type="entry name" value="DALR_2"/>
    <property type="match status" value="1"/>
</dbReference>
<dbReference type="Pfam" id="PF01406">
    <property type="entry name" value="tRNA-synt_1e"/>
    <property type="match status" value="1"/>
</dbReference>
<dbReference type="PRINTS" id="PR00983">
    <property type="entry name" value="TRNASYNTHCYS"/>
</dbReference>
<dbReference type="SMART" id="SM00840">
    <property type="entry name" value="DALR_2"/>
    <property type="match status" value="1"/>
</dbReference>
<dbReference type="SUPFAM" id="SSF47323">
    <property type="entry name" value="Anticodon-binding domain of a subclass of class I aminoacyl-tRNA synthetases"/>
    <property type="match status" value="1"/>
</dbReference>
<dbReference type="SUPFAM" id="SSF52374">
    <property type="entry name" value="Nucleotidylyl transferase"/>
    <property type="match status" value="1"/>
</dbReference>
<gene>
    <name evidence="1" type="primary">cysS</name>
    <name type="ordered locus">BCA_0118</name>
</gene>
<feature type="chain" id="PRO_1000199036" description="Cysteine--tRNA ligase">
    <location>
        <begin position="1"/>
        <end position="465"/>
    </location>
</feature>
<feature type="short sequence motif" description="'HIGH' region">
    <location>
        <begin position="31"/>
        <end position="41"/>
    </location>
</feature>
<feature type="short sequence motif" description="'KMSKS' region">
    <location>
        <begin position="266"/>
        <end position="270"/>
    </location>
</feature>
<feature type="binding site" evidence="1">
    <location>
        <position position="29"/>
    </location>
    <ligand>
        <name>Zn(2+)</name>
        <dbReference type="ChEBI" id="CHEBI:29105"/>
    </ligand>
</feature>
<feature type="binding site" evidence="1">
    <location>
        <position position="209"/>
    </location>
    <ligand>
        <name>Zn(2+)</name>
        <dbReference type="ChEBI" id="CHEBI:29105"/>
    </ligand>
</feature>
<feature type="binding site" evidence="1">
    <location>
        <position position="234"/>
    </location>
    <ligand>
        <name>Zn(2+)</name>
        <dbReference type="ChEBI" id="CHEBI:29105"/>
    </ligand>
</feature>
<feature type="binding site" evidence="1">
    <location>
        <position position="238"/>
    </location>
    <ligand>
        <name>Zn(2+)</name>
        <dbReference type="ChEBI" id="CHEBI:29105"/>
    </ligand>
</feature>
<feature type="binding site" evidence="1">
    <location>
        <position position="269"/>
    </location>
    <ligand>
        <name>ATP</name>
        <dbReference type="ChEBI" id="CHEBI:30616"/>
    </ligand>
</feature>
<feature type="modified residue" description="Phosphoserine" evidence="1">
    <location>
        <position position="270"/>
    </location>
</feature>
<evidence type="ECO:0000255" key="1">
    <source>
        <dbReference type="HAMAP-Rule" id="MF_00041"/>
    </source>
</evidence>
<name>SYC_BACC3</name>
<keyword id="KW-0030">Aminoacyl-tRNA synthetase</keyword>
<keyword id="KW-0067">ATP-binding</keyword>
<keyword id="KW-0963">Cytoplasm</keyword>
<keyword id="KW-0436">Ligase</keyword>
<keyword id="KW-0479">Metal-binding</keyword>
<keyword id="KW-0547">Nucleotide-binding</keyword>
<keyword id="KW-0597">Phosphoprotein</keyword>
<keyword id="KW-0648">Protein biosynthesis</keyword>
<keyword id="KW-0862">Zinc</keyword>
<sequence>MTIHIYNTLTRQKEEFIPLEENKVKMYVCGPTVYNYIHIGNARPPMVFDTVRRYLEYKGYDVQYVSNFTDVDDKLIKAANELGEDVPTIADRFVEAYFEDVTALGCKHATVHPRVTENMDIIIEFIQELVNKGYAYESEGDVYFRTKEFEGYGKLSHQPIADLRHGARIEVGEKKQDPLDFALWKAAKEGEIFWESPWGQGRPGWHIECSAMARKYLGDTIDIHAGGQDLAFPHHENEIAQSEALTGKTFARYWMHNGYININNEKMSKSLGNFILVHDIIKQYDPQLIRFFMLSVHYRHPINFSEELLQSTNNGLERIKTAYGNLKHRMESSTDLTDHNEKWLADLEKFQTAFEEAMNDDFNTANAITELYNVANHANQYLLEEHTSTVVIEAYVKQLETLFDILGLELAQEELLDEEIEALIQKRIEARKNRDFALSDQIRDDLKDRNIILEDTAQGTRWKRG</sequence>
<organism>
    <name type="scientific">Bacillus cereus (strain 03BB102)</name>
    <dbReference type="NCBI Taxonomy" id="572264"/>
    <lineage>
        <taxon>Bacteria</taxon>
        <taxon>Bacillati</taxon>
        <taxon>Bacillota</taxon>
        <taxon>Bacilli</taxon>
        <taxon>Bacillales</taxon>
        <taxon>Bacillaceae</taxon>
        <taxon>Bacillus</taxon>
        <taxon>Bacillus cereus group</taxon>
    </lineage>
</organism>
<accession>C1ET19</accession>
<protein>
    <recommendedName>
        <fullName evidence="1">Cysteine--tRNA ligase</fullName>
        <ecNumber evidence="1">6.1.1.16</ecNumber>
    </recommendedName>
    <alternativeName>
        <fullName evidence="1">Cysteinyl-tRNA synthetase</fullName>
        <shortName evidence="1">CysRS</shortName>
    </alternativeName>
</protein>
<comment type="catalytic activity">
    <reaction evidence="1">
        <text>tRNA(Cys) + L-cysteine + ATP = L-cysteinyl-tRNA(Cys) + AMP + diphosphate</text>
        <dbReference type="Rhea" id="RHEA:17773"/>
        <dbReference type="Rhea" id="RHEA-COMP:9661"/>
        <dbReference type="Rhea" id="RHEA-COMP:9679"/>
        <dbReference type="ChEBI" id="CHEBI:30616"/>
        <dbReference type="ChEBI" id="CHEBI:33019"/>
        <dbReference type="ChEBI" id="CHEBI:35235"/>
        <dbReference type="ChEBI" id="CHEBI:78442"/>
        <dbReference type="ChEBI" id="CHEBI:78517"/>
        <dbReference type="ChEBI" id="CHEBI:456215"/>
        <dbReference type="EC" id="6.1.1.16"/>
    </reaction>
</comment>
<comment type="cofactor">
    <cofactor evidence="1">
        <name>Zn(2+)</name>
        <dbReference type="ChEBI" id="CHEBI:29105"/>
    </cofactor>
    <text evidence="1">Binds 1 zinc ion per subunit.</text>
</comment>
<comment type="subunit">
    <text evidence="1">Monomer.</text>
</comment>
<comment type="subcellular location">
    <subcellularLocation>
        <location evidence="1">Cytoplasm</location>
    </subcellularLocation>
</comment>
<comment type="similarity">
    <text evidence="1">Belongs to the class-I aminoacyl-tRNA synthetase family.</text>
</comment>
<reference key="1">
    <citation type="submission" date="2009-02" db="EMBL/GenBank/DDBJ databases">
        <title>Genome sequence of Bacillus cereus 03BB102.</title>
        <authorList>
            <person name="Dodson R.J."/>
            <person name="Jackson P."/>
            <person name="Munk A.C."/>
            <person name="Brettin T."/>
            <person name="Bruce D."/>
            <person name="Detter C."/>
            <person name="Tapia R."/>
            <person name="Han C."/>
            <person name="Sutton G."/>
            <person name="Sims D."/>
        </authorList>
    </citation>
    <scope>NUCLEOTIDE SEQUENCE [LARGE SCALE GENOMIC DNA]</scope>
    <source>
        <strain>03BB102</strain>
    </source>
</reference>
<proteinExistence type="inferred from homology"/>